<comment type="function">
    <text evidence="1">Presumably involved in the processing and regular turnover of intracellular proteins. Catalyzes the removal of unsubstituted N-terminal amino acids from various peptides.</text>
</comment>
<comment type="catalytic activity">
    <reaction evidence="1">
        <text>Release of an N-terminal amino acid, Xaa-|-Yaa-, in which Xaa is preferably Leu, but may be other amino acids including Pro although not Arg or Lys, and Yaa may be Pro. Amino acid amides and methyl esters are also readily hydrolyzed, but rates on arylamides are exceedingly low.</text>
        <dbReference type="EC" id="3.4.11.1"/>
    </reaction>
</comment>
<comment type="catalytic activity">
    <reaction evidence="1">
        <text>Release of an N-terminal amino acid, preferentially leucine, but not glutamic or aspartic acids.</text>
        <dbReference type="EC" id="3.4.11.10"/>
    </reaction>
</comment>
<comment type="cofactor">
    <cofactor evidence="1">
        <name>Mn(2+)</name>
        <dbReference type="ChEBI" id="CHEBI:29035"/>
    </cofactor>
    <text evidence="1">Binds 2 manganese ions per subunit.</text>
</comment>
<comment type="subcellular location">
    <subcellularLocation>
        <location evidence="1">Cytoplasm</location>
    </subcellularLocation>
</comment>
<comment type="similarity">
    <text evidence="1">Belongs to the peptidase M17 family.</text>
</comment>
<feature type="chain" id="PRO_0000165723" description="Probable cytosol aminopeptidase">
    <location>
        <begin position="1"/>
        <end position="500"/>
    </location>
</feature>
<feature type="active site" evidence="1">
    <location>
        <position position="277"/>
    </location>
</feature>
<feature type="active site" evidence="1">
    <location>
        <position position="351"/>
    </location>
</feature>
<feature type="binding site" evidence="1">
    <location>
        <position position="265"/>
    </location>
    <ligand>
        <name>Mn(2+)</name>
        <dbReference type="ChEBI" id="CHEBI:29035"/>
        <label>2</label>
    </ligand>
</feature>
<feature type="binding site" evidence="1">
    <location>
        <position position="270"/>
    </location>
    <ligand>
        <name>Mn(2+)</name>
        <dbReference type="ChEBI" id="CHEBI:29035"/>
        <label>1</label>
    </ligand>
</feature>
<feature type="binding site" evidence="1">
    <location>
        <position position="270"/>
    </location>
    <ligand>
        <name>Mn(2+)</name>
        <dbReference type="ChEBI" id="CHEBI:29035"/>
        <label>2</label>
    </ligand>
</feature>
<feature type="binding site" evidence="1">
    <location>
        <position position="288"/>
    </location>
    <ligand>
        <name>Mn(2+)</name>
        <dbReference type="ChEBI" id="CHEBI:29035"/>
        <label>2</label>
    </ligand>
</feature>
<feature type="binding site" evidence="1">
    <location>
        <position position="347"/>
    </location>
    <ligand>
        <name>Mn(2+)</name>
        <dbReference type="ChEBI" id="CHEBI:29035"/>
        <label>1</label>
    </ligand>
</feature>
<feature type="binding site" evidence="1">
    <location>
        <position position="349"/>
    </location>
    <ligand>
        <name>Mn(2+)</name>
        <dbReference type="ChEBI" id="CHEBI:29035"/>
        <label>1</label>
    </ligand>
</feature>
<feature type="binding site" evidence="1">
    <location>
        <position position="349"/>
    </location>
    <ligand>
        <name>Mn(2+)</name>
        <dbReference type="ChEBI" id="CHEBI:29035"/>
        <label>2</label>
    </ligand>
</feature>
<reference key="1">
    <citation type="journal article" date="2004" name="Science">
        <title>A predator unmasked: life cycle of Bdellovibrio bacteriovorus from a genomic perspective.</title>
        <authorList>
            <person name="Rendulic S."/>
            <person name="Jagtap P."/>
            <person name="Rosinus A."/>
            <person name="Eppinger M."/>
            <person name="Baar C."/>
            <person name="Lanz C."/>
            <person name="Keller H."/>
            <person name="Lambert C."/>
            <person name="Evans K.J."/>
            <person name="Goesmann A."/>
            <person name="Meyer F."/>
            <person name="Sockett R.E."/>
            <person name="Schuster S.C."/>
        </authorList>
    </citation>
    <scope>NUCLEOTIDE SEQUENCE [LARGE SCALE GENOMIC DNA]</scope>
    <source>
        <strain>ATCC 15356 / DSM 50701 / NCIMB 9529 / HD100</strain>
    </source>
</reference>
<accession>Q6MH10</accession>
<sequence length="500" mass="53262">MAFNLLNKDIDTLTCPALVVFSKSSSQKDKLAKVTHSEIHKALLPSLEEKTISGKHQETVVFREFSFKGFRHVIVVGLGKENEITHESVRQSMASAYEAIKALNVTEAAVHFDGITAGKKDAADFAKATAEGLILTSYVFNELMSGKKETKEINVHVVSKMGNDKAVKAAFNEGAILGSVVNFSRRLGDLPGNLMTPTILADSAVEGAKGIANLKVTVWDKARIKKEKMGGLLGVSNGSDQEPRFIIMEYKGAAASKKPVCFVGKGLTFDCGGISIKPGAGMEEMKYDMCGGANVIGTLLAIAKLKLKVNAVGLVASTENLINGSATKPGDVHTARNGKTFEVNNTDAEGRLILADALSYATELQPQMIVDAATLTGAMVIALGNTHTGYFTRNSALKTKVEKAAAESGEWVWNMPLTDFHVKDMKGTYADLSNISSGKGAGSATAAAFLEQFVGEGIPWAHFDIAGTGWAVGNRLPYCPKKGASGAMIRTFVEIAKQYT</sequence>
<keyword id="KW-0031">Aminopeptidase</keyword>
<keyword id="KW-0963">Cytoplasm</keyword>
<keyword id="KW-0378">Hydrolase</keyword>
<keyword id="KW-0464">Manganese</keyword>
<keyword id="KW-0479">Metal-binding</keyword>
<keyword id="KW-0645">Protease</keyword>
<keyword id="KW-1185">Reference proteome</keyword>
<gene>
    <name evidence="1" type="primary">pepA</name>
    <name type="ordered locus">Bd3755</name>
</gene>
<name>AMPA_BDEBA</name>
<dbReference type="EC" id="3.4.11.1" evidence="1"/>
<dbReference type="EC" id="3.4.11.10" evidence="1"/>
<dbReference type="EMBL" id="BX842656">
    <property type="protein sequence ID" value="CAE81117.1"/>
    <property type="molecule type" value="Genomic_DNA"/>
</dbReference>
<dbReference type="RefSeq" id="WP_011166060.1">
    <property type="nucleotide sequence ID" value="NC_005363.1"/>
</dbReference>
<dbReference type="SMR" id="Q6MH10"/>
<dbReference type="STRING" id="264462.Bd3755"/>
<dbReference type="GeneID" id="93014533"/>
<dbReference type="KEGG" id="bba:Bd3755"/>
<dbReference type="eggNOG" id="COG0260">
    <property type="taxonomic scope" value="Bacteria"/>
</dbReference>
<dbReference type="HOGENOM" id="CLU_013734_2_2_7"/>
<dbReference type="Proteomes" id="UP000008080">
    <property type="component" value="Chromosome"/>
</dbReference>
<dbReference type="GO" id="GO:0005737">
    <property type="term" value="C:cytoplasm"/>
    <property type="evidence" value="ECO:0007669"/>
    <property type="project" value="UniProtKB-SubCell"/>
</dbReference>
<dbReference type="GO" id="GO:0030145">
    <property type="term" value="F:manganese ion binding"/>
    <property type="evidence" value="ECO:0007669"/>
    <property type="project" value="UniProtKB-UniRule"/>
</dbReference>
<dbReference type="GO" id="GO:0070006">
    <property type="term" value="F:metalloaminopeptidase activity"/>
    <property type="evidence" value="ECO:0007669"/>
    <property type="project" value="InterPro"/>
</dbReference>
<dbReference type="GO" id="GO:0006508">
    <property type="term" value="P:proteolysis"/>
    <property type="evidence" value="ECO:0007669"/>
    <property type="project" value="UniProtKB-KW"/>
</dbReference>
<dbReference type="CDD" id="cd00433">
    <property type="entry name" value="Peptidase_M17"/>
    <property type="match status" value="1"/>
</dbReference>
<dbReference type="Gene3D" id="3.40.220.10">
    <property type="entry name" value="Leucine Aminopeptidase, subunit E, domain 1"/>
    <property type="match status" value="1"/>
</dbReference>
<dbReference type="Gene3D" id="3.40.630.10">
    <property type="entry name" value="Zn peptidases"/>
    <property type="match status" value="1"/>
</dbReference>
<dbReference type="HAMAP" id="MF_00181">
    <property type="entry name" value="Cytosol_peptidase_M17"/>
    <property type="match status" value="1"/>
</dbReference>
<dbReference type="InterPro" id="IPR011356">
    <property type="entry name" value="Leucine_aapep/pepB"/>
</dbReference>
<dbReference type="InterPro" id="IPR043472">
    <property type="entry name" value="Macro_dom-like"/>
</dbReference>
<dbReference type="InterPro" id="IPR000819">
    <property type="entry name" value="Peptidase_M17_C"/>
</dbReference>
<dbReference type="InterPro" id="IPR023042">
    <property type="entry name" value="Peptidase_M17_leu_NH2_pept"/>
</dbReference>
<dbReference type="InterPro" id="IPR008283">
    <property type="entry name" value="Peptidase_M17_N"/>
</dbReference>
<dbReference type="NCBIfam" id="NF002073">
    <property type="entry name" value="PRK00913.1-2"/>
    <property type="match status" value="1"/>
</dbReference>
<dbReference type="NCBIfam" id="NF002074">
    <property type="entry name" value="PRK00913.1-4"/>
    <property type="match status" value="1"/>
</dbReference>
<dbReference type="PANTHER" id="PTHR11963:SF23">
    <property type="entry name" value="CYTOSOL AMINOPEPTIDASE"/>
    <property type="match status" value="1"/>
</dbReference>
<dbReference type="PANTHER" id="PTHR11963">
    <property type="entry name" value="LEUCINE AMINOPEPTIDASE-RELATED"/>
    <property type="match status" value="1"/>
</dbReference>
<dbReference type="Pfam" id="PF00883">
    <property type="entry name" value="Peptidase_M17"/>
    <property type="match status" value="1"/>
</dbReference>
<dbReference type="Pfam" id="PF02789">
    <property type="entry name" value="Peptidase_M17_N"/>
    <property type="match status" value="1"/>
</dbReference>
<dbReference type="PRINTS" id="PR00481">
    <property type="entry name" value="LAMNOPPTDASE"/>
</dbReference>
<dbReference type="SUPFAM" id="SSF52949">
    <property type="entry name" value="Macro domain-like"/>
    <property type="match status" value="1"/>
</dbReference>
<dbReference type="SUPFAM" id="SSF53187">
    <property type="entry name" value="Zn-dependent exopeptidases"/>
    <property type="match status" value="1"/>
</dbReference>
<dbReference type="PROSITE" id="PS00631">
    <property type="entry name" value="CYTOSOL_AP"/>
    <property type="match status" value="1"/>
</dbReference>
<protein>
    <recommendedName>
        <fullName evidence="1">Probable cytosol aminopeptidase</fullName>
        <ecNumber evidence="1">3.4.11.1</ecNumber>
    </recommendedName>
    <alternativeName>
        <fullName evidence="1">Leucine aminopeptidase</fullName>
        <shortName evidence="1">LAP</shortName>
        <ecNumber evidence="1">3.4.11.10</ecNumber>
    </alternativeName>
    <alternativeName>
        <fullName evidence="1">Leucyl aminopeptidase</fullName>
    </alternativeName>
</protein>
<evidence type="ECO:0000255" key="1">
    <source>
        <dbReference type="HAMAP-Rule" id="MF_00181"/>
    </source>
</evidence>
<proteinExistence type="inferred from homology"/>
<organism>
    <name type="scientific">Bdellovibrio bacteriovorus (strain ATCC 15356 / DSM 50701 / NCIMB 9529 / HD100)</name>
    <dbReference type="NCBI Taxonomy" id="264462"/>
    <lineage>
        <taxon>Bacteria</taxon>
        <taxon>Pseudomonadati</taxon>
        <taxon>Bdellovibrionota</taxon>
        <taxon>Bdellovibrionia</taxon>
        <taxon>Bdellovibrionales</taxon>
        <taxon>Pseudobdellovibrionaceae</taxon>
        <taxon>Bdellovibrio</taxon>
    </lineage>
</organism>